<keyword id="KW-0143">Chaperone</keyword>
<keyword id="KW-0963">Cytoplasm</keyword>
<keyword id="KW-0342">GTP-binding</keyword>
<keyword id="KW-0996">Nickel insertion</keyword>
<keyword id="KW-0547">Nucleotide-binding</keyword>
<gene>
    <name evidence="1" type="primary">ureG</name>
    <name type="ordered locus">BURPS1710b_3138</name>
</gene>
<reference key="1">
    <citation type="journal article" date="2010" name="Genome Biol. Evol.">
        <title>Continuing evolution of Burkholderia mallei through genome reduction and large-scale rearrangements.</title>
        <authorList>
            <person name="Losada L."/>
            <person name="Ronning C.M."/>
            <person name="DeShazer D."/>
            <person name="Woods D."/>
            <person name="Fedorova N."/>
            <person name="Kim H.S."/>
            <person name="Shabalina S.A."/>
            <person name="Pearson T.R."/>
            <person name="Brinkac L."/>
            <person name="Tan P."/>
            <person name="Nandi T."/>
            <person name="Crabtree J."/>
            <person name="Badger J."/>
            <person name="Beckstrom-Sternberg S."/>
            <person name="Saqib M."/>
            <person name="Schutzer S.E."/>
            <person name="Keim P."/>
            <person name="Nierman W.C."/>
        </authorList>
    </citation>
    <scope>NUCLEOTIDE SEQUENCE [LARGE SCALE GENOMIC DNA]</scope>
    <source>
        <strain>1710b</strain>
    </source>
</reference>
<sequence>MNAPRFAAPARRTKKLPPLRVGIGGPVGSGKTTLLEMLCKGMRERYDLVAITNDIYTKEDQRLLTIAGALPEARIMGVETGGCPHTAIREDASINLEAVERMLVRFPDADIVFIESGGDNLAATFSPELSDLTIYVIDVAGGEKIPRKGGPGITKSDLLVINKTDLAPLVGANLEVMASDTRKMRGERPYVMCNLKALDGVADVIAFIENKGLLTV</sequence>
<feature type="chain" id="PRO_0000347377" description="Urease accessory protein UreG">
    <location>
        <begin position="1"/>
        <end position="216"/>
    </location>
</feature>
<feature type="binding site" evidence="1">
    <location>
        <begin position="25"/>
        <end position="32"/>
    </location>
    <ligand>
        <name>GTP</name>
        <dbReference type="ChEBI" id="CHEBI:37565"/>
    </ligand>
</feature>
<dbReference type="EMBL" id="CP000124">
    <property type="protein sequence ID" value="ABA47767.1"/>
    <property type="molecule type" value="Genomic_DNA"/>
</dbReference>
<dbReference type="RefSeq" id="WP_004527585.1">
    <property type="nucleotide sequence ID" value="NC_007434.1"/>
</dbReference>
<dbReference type="SMR" id="Q3JPJ3"/>
<dbReference type="EnsemblBacteria" id="ABA47767">
    <property type="protein sequence ID" value="ABA47767"/>
    <property type="gene ID" value="BURPS1710b_3138"/>
</dbReference>
<dbReference type="GeneID" id="93061242"/>
<dbReference type="KEGG" id="bpm:BURPS1710b_3138"/>
<dbReference type="HOGENOM" id="CLU_072144_1_0_4"/>
<dbReference type="Proteomes" id="UP000002700">
    <property type="component" value="Chromosome I"/>
</dbReference>
<dbReference type="GO" id="GO:0005737">
    <property type="term" value="C:cytoplasm"/>
    <property type="evidence" value="ECO:0007669"/>
    <property type="project" value="UniProtKB-SubCell"/>
</dbReference>
<dbReference type="GO" id="GO:0005525">
    <property type="term" value="F:GTP binding"/>
    <property type="evidence" value="ECO:0007669"/>
    <property type="project" value="UniProtKB-KW"/>
</dbReference>
<dbReference type="GO" id="GO:0003924">
    <property type="term" value="F:GTPase activity"/>
    <property type="evidence" value="ECO:0007669"/>
    <property type="project" value="InterPro"/>
</dbReference>
<dbReference type="GO" id="GO:0016151">
    <property type="term" value="F:nickel cation binding"/>
    <property type="evidence" value="ECO:0007669"/>
    <property type="project" value="UniProtKB-UniRule"/>
</dbReference>
<dbReference type="GO" id="GO:0043419">
    <property type="term" value="P:urea catabolic process"/>
    <property type="evidence" value="ECO:0007669"/>
    <property type="project" value="InterPro"/>
</dbReference>
<dbReference type="CDD" id="cd05540">
    <property type="entry name" value="UreG"/>
    <property type="match status" value="1"/>
</dbReference>
<dbReference type="FunFam" id="3.40.50.300:FF:000208">
    <property type="entry name" value="Urease accessory protein UreG"/>
    <property type="match status" value="1"/>
</dbReference>
<dbReference type="Gene3D" id="3.40.50.300">
    <property type="entry name" value="P-loop containing nucleotide triphosphate hydrolases"/>
    <property type="match status" value="1"/>
</dbReference>
<dbReference type="HAMAP" id="MF_01389">
    <property type="entry name" value="UreG"/>
    <property type="match status" value="1"/>
</dbReference>
<dbReference type="InterPro" id="IPR003495">
    <property type="entry name" value="CobW/HypB/UreG_nucleotide-bd"/>
</dbReference>
<dbReference type="InterPro" id="IPR027417">
    <property type="entry name" value="P-loop_NTPase"/>
</dbReference>
<dbReference type="InterPro" id="IPR004400">
    <property type="entry name" value="UreG"/>
</dbReference>
<dbReference type="NCBIfam" id="TIGR00101">
    <property type="entry name" value="ureG"/>
    <property type="match status" value="1"/>
</dbReference>
<dbReference type="PANTHER" id="PTHR31715">
    <property type="entry name" value="UREASE ACCESSORY PROTEIN G"/>
    <property type="match status" value="1"/>
</dbReference>
<dbReference type="PANTHER" id="PTHR31715:SF0">
    <property type="entry name" value="UREASE ACCESSORY PROTEIN G"/>
    <property type="match status" value="1"/>
</dbReference>
<dbReference type="Pfam" id="PF02492">
    <property type="entry name" value="cobW"/>
    <property type="match status" value="1"/>
</dbReference>
<dbReference type="PIRSF" id="PIRSF005624">
    <property type="entry name" value="Ni-bind_GTPase"/>
    <property type="match status" value="1"/>
</dbReference>
<dbReference type="SUPFAM" id="SSF52540">
    <property type="entry name" value="P-loop containing nucleoside triphosphate hydrolases"/>
    <property type="match status" value="1"/>
</dbReference>
<name>UREG_BURP1</name>
<accession>Q3JPJ3</accession>
<organism>
    <name type="scientific">Burkholderia pseudomallei (strain 1710b)</name>
    <dbReference type="NCBI Taxonomy" id="320372"/>
    <lineage>
        <taxon>Bacteria</taxon>
        <taxon>Pseudomonadati</taxon>
        <taxon>Pseudomonadota</taxon>
        <taxon>Betaproteobacteria</taxon>
        <taxon>Burkholderiales</taxon>
        <taxon>Burkholderiaceae</taxon>
        <taxon>Burkholderia</taxon>
        <taxon>pseudomallei group</taxon>
    </lineage>
</organism>
<comment type="function">
    <text evidence="1">Facilitates the functional incorporation of the urease nickel metallocenter. This process requires GTP hydrolysis, probably effectuated by UreG.</text>
</comment>
<comment type="subunit">
    <text evidence="1">Homodimer. UreD, UreF and UreG form a complex that acts as a GTP-hydrolysis-dependent molecular chaperone, activating the urease apoprotein by helping to assemble the nickel containing metallocenter of UreC. The UreE protein probably delivers the nickel.</text>
</comment>
<comment type="subcellular location">
    <subcellularLocation>
        <location evidence="1">Cytoplasm</location>
    </subcellularLocation>
</comment>
<comment type="similarity">
    <text evidence="1">Belongs to the SIMIBI class G3E GTPase family. UreG subfamily.</text>
</comment>
<proteinExistence type="inferred from homology"/>
<evidence type="ECO:0000255" key="1">
    <source>
        <dbReference type="HAMAP-Rule" id="MF_01389"/>
    </source>
</evidence>
<protein>
    <recommendedName>
        <fullName evidence="1">Urease accessory protein UreG</fullName>
    </recommendedName>
</protein>